<sequence length="61" mass="7119">MSRTSLEVKAQRKPKFSARAYNRCPICGRPRAYLRKFGLCRICFRNMALRGELPGVRKSSW</sequence>
<reference key="1">
    <citation type="journal article" date="2004" name="Nat. Biotechnol.">
        <title>The genome sequence of the anaerobic, sulfate-reducing bacterium Desulfovibrio vulgaris Hildenborough.</title>
        <authorList>
            <person name="Heidelberg J.F."/>
            <person name="Seshadri R."/>
            <person name="Haveman S.A."/>
            <person name="Hemme C.L."/>
            <person name="Paulsen I.T."/>
            <person name="Kolonay J.F."/>
            <person name="Eisen J.A."/>
            <person name="Ward N.L."/>
            <person name="Methe B.A."/>
            <person name="Brinkac L.M."/>
            <person name="Daugherty S.C."/>
            <person name="DeBoy R.T."/>
            <person name="Dodson R.J."/>
            <person name="Durkin A.S."/>
            <person name="Madupu R."/>
            <person name="Nelson W.C."/>
            <person name="Sullivan S.A."/>
            <person name="Fouts D.E."/>
            <person name="Haft D.H."/>
            <person name="Selengut J."/>
            <person name="Peterson J.D."/>
            <person name="Davidsen T.M."/>
            <person name="Zafar N."/>
            <person name="Zhou L."/>
            <person name="Radune D."/>
            <person name="Dimitrov G."/>
            <person name="Hance M."/>
            <person name="Tran K."/>
            <person name="Khouri H.M."/>
            <person name="Gill J."/>
            <person name="Utterback T.R."/>
            <person name="Feldblyum T.V."/>
            <person name="Wall J.D."/>
            <person name="Voordouw G."/>
            <person name="Fraser C.M."/>
        </authorList>
    </citation>
    <scope>NUCLEOTIDE SEQUENCE [LARGE SCALE GENOMIC DNA]</scope>
    <source>
        <strain>ATCC 29579 / DSM 644 / CCUG 34227 / NCIMB 8303 / VKM B-1760 / Hildenborough</strain>
    </source>
</reference>
<evidence type="ECO:0000255" key="1">
    <source>
        <dbReference type="HAMAP-Rule" id="MF_01364"/>
    </source>
</evidence>
<evidence type="ECO:0000305" key="2"/>
<name>RS14Z_NITV2</name>
<comment type="function">
    <text evidence="1">Binds 16S rRNA, required for the assembly of 30S particles and may also be responsible for determining the conformation of the 16S rRNA at the A site.</text>
</comment>
<comment type="cofactor">
    <cofactor evidence="1">
        <name>Zn(2+)</name>
        <dbReference type="ChEBI" id="CHEBI:29105"/>
    </cofactor>
    <text evidence="1">Binds 1 zinc ion per subunit.</text>
</comment>
<comment type="subunit">
    <text evidence="1">Part of the 30S ribosomal subunit. Contacts proteins S3 and S10.</text>
</comment>
<comment type="similarity">
    <text evidence="1">Belongs to the universal ribosomal protein uS14 family. Zinc-binding uS14 subfamily.</text>
</comment>
<dbReference type="EMBL" id="AE017285">
    <property type="protein sequence ID" value="AAS95794.1"/>
    <property type="molecule type" value="Genomic_DNA"/>
</dbReference>
<dbReference type="RefSeq" id="WP_010938611.1">
    <property type="nucleotide sequence ID" value="NC_002937.3"/>
</dbReference>
<dbReference type="RefSeq" id="YP_010535.1">
    <property type="nucleotide sequence ID" value="NC_002937.3"/>
</dbReference>
<dbReference type="SMR" id="Q72CG7"/>
<dbReference type="STRING" id="882.DVU_1316"/>
<dbReference type="PaxDb" id="882-DVU_1316"/>
<dbReference type="EnsemblBacteria" id="AAS95794">
    <property type="protein sequence ID" value="AAS95794"/>
    <property type="gene ID" value="DVU_1316"/>
</dbReference>
<dbReference type="KEGG" id="dvu:DVU_1316"/>
<dbReference type="PATRIC" id="fig|882.5.peg.1228"/>
<dbReference type="eggNOG" id="COG0199">
    <property type="taxonomic scope" value="Bacteria"/>
</dbReference>
<dbReference type="HOGENOM" id="CLU_139869_3_0_7"/>
<dbReference type="OrthoDB" id="9810484at2"/>
<dbReference type="PhylomeDB" id="Q72CG7"/>
<dbReference type="Proteomes" id="UP000002194">
    <property type="component" value="Chromosome"/>
</dbReference>
<dbReference type="GO" id="GO:0005737">
    <property type="term" value="C:cytoplasm"/>
    <property type="evidence" value="ECO:0007669"/>
    <property type="project" value="UniProtKB-ARBA"/>
</dbReference>
<dbReference type="GO" id="GO:0015935">
    <property type="term" value="C:small ribosomal subunit"/>
    <property type="evidence" value="ECO:0007669"/>
    <property type="project" value="TreeGrafter"/>
</dbReference>
<dbReference type="GO" id="GO:0019843">
    <property type="term" value="F:rRNA binding"/>
    <property type="evidence" value="ECO:0007669"/>
    <property type="project" value="UniProtKB-UniRule"/>
</dbReference>
<dbReference type="GO" id="GO:0003735">
    <property type="term" value="F:structural constituent of ribosome"/>
    <property type="evidence" value="ECO:0007669"/>
    <property type="project" value="InterPro"/>
</dbReference>
<dbReference type="GO" id="GO:0008270">
    <property type="term" value="F:zinc ion binding"/>
    <property type="evidence" value="ECO:0007669"/>
    <property type="project" value="UniProtKB-UniRule"/>
</dbReference>
<dbReference type="GO" id="GO:0006412">
    <property type="term" value="P:translation"/>
    <property type="evidence" value="ECO:0007669"/>
    <property type="project" value="UniProtKB-UniRule"/>
</dbReference>
<dbReference type="FunFam" id="4.10.830.10:FF:000001">
    <property type="entry name" value="30S ribosomal protein S14 type Z"/>
    <property type="match status" value="1"/>
</dbReference>
<dbReference type="Gene3D" id="4.10.830.10">
    <property type="entry name" value="30s Ribosomal Protein S14, Chain N"/>
    <property type="match status" value="1"/>
</dbReference>
<dbReference type="HAMAP" id="MF_01364_B">
    <property type="entry name" value="Ribosomal_uS14_2_B"/>
    <property type="match status" value="1"/>
</dbReference>
<dbReference type="InterPro" id="IPR001209">
    <property type="entry name" value="Ribosomal_uS14"/>
</dbReference>
<dbReference type="InterPro" id="IPR023053">
    <property type="entry name" value="Ribosomal_uS14_bact"/>
</dbReference>
<dbReference type="InterPro" id="IPR018271">
    <property type="entry name" value="Ribosomal_uS14_CS"/>
</dbReference>
<dbReference type="InterPro" id="IPR043140">
    <property type="entry name" value="Ribosomal_uS14_sf"/>
</dbReference>
<dbReference type="NCBIfam" id="NF005974">
    <property type="entry name" value="PRK08061.1"/>
    <property type="match status" value="1"/>
</dbReference>
<dbReference type="PANTHER" id="PTHR19836">
    <property type="entry name" value="30S RIBOSOMAL PROTEIN S14"/>
    <property type="match status" value="1"/>
</dbReference>
<dbReference type="PANTHER" id="PTHR19836:SF19">
    <property type="entry name" value="SMALL RIBOSOMAL SUBUNIT PROTEIN US14M"/>
    <property type="match status" value="1"/>
</dbReference>
<dbReference type="Pfam" id="PF00253">
    <property type="entry name" value="Ribosomal_S14"/>
    <property type="match status" value="1"/>
</dbReference>
<dbReference type="SUPFAM" id="SSF57716">
    <property type="entry name" value="Glucocorticoid receptor-like (DNA-binding domain)"/>
    <property type="match status" value="1"/>
</dbReference>
<dbReference type="PROSITE" id="PS00527">
    <property type="entry name" value="RIBOSOMAL_S14"/>
    <property type="match status" value="1"/>
</dbReference>
<accession>Q72CG7</accession>
<protein>
    <recommendedName>
        <fullName evidence="1">Small ribosomal subunit protein uS14</fullName>
    </recommendedName>
    <alternativeName>
        <fullName evidence="2">30S ribosomal protein S14 type Z</fullName>
    </alternativeName>
</protein>
<organism>
    <name type="scientific">Nitratidesulfovibrio vulgaris (strain ATCC 29579 / DSM 644 / CCUG 34227 / NCIMB 8303 / VKM B-1760 / Hildenborough)</name>
    <name type="common">Desulfovibrio vulgaris</name>
    <dbReference type="NCBI Taxonomy" id="882"/>
    <lineage>
        <taxon>Bacteria</taxon>
        <taxon>Pseudomonadati</taxon>
        <taxon>Thermodesulfobacteriota</taxon>
        <taxon>Desulfovibrionia</taxon>
        <taxon>Desulfovibrionales</taxon>
        <taxon>Desulfovibrionaceae</taxon>
        <taxon>Nitratidesulfovibrio</taxon>
    </lineage>
</organism>
<gene>
    <name evidence="1" type="primary">rpsZ</name>
    <name evidence="1" type="synonym">rpsN</name>
    <name type="ordered locus">DVU_1316</name>
</gene>
<keyword id="KW-0479">Metal-binding</keyword>
<keyword id="KW-1185">Reference proteome</keyword>
<keyword id="KW-0687">Ribonucleoprotein</keyword>
<keyword id="KW-0689">Ribosomal protein</keyword>
<keyword id="KW-0694">RNA-binding</keyword>
<keyword id="KW-0699">rRNA-binding</keyword>
<keyword id="KW-0862">Zinc</keyword>
<proteinExistence type="inferred from homology"/>
<feature type="chain" id="PRO_0000269099" description="Small ribosomal subunit protein uS14">
    <location>
        <begin position="1"/>
        <end position="61"/>
    </location>
</feature>
<feature type="binding site" evidence="1">
    <location>
        <position position="24"/>
    </location>
    <ligand>
        <name>Zn(2+)</name>
        <dbReference type="ChEBI" id="CHEBI:29105"/>
    </ligand>
</feature>
<feature type="binding site" evidence="1">
    <location>
        <position position="27"/>
    </location>
    <ligand>
        <name>Zn(2+)</name>
        <dbReference type="ChEBI" id="CHEBI:29105"/>
    </ligand>
</feature>
<feature type="binding site" evidence="1">
    <location>
        <position position="40"/>
    </location>
    <ligand>
        <name>Zn(2+)</name>
        <dbReference type="ChEBI" id="CHEBI:29105"/>
    </ligand>
</feature>
<feature type="binding site" evidence="1">
    <location>
        <position position="43"/>
    </location>
    <ligand>
        <name>Zn(2+)</name>
        <dbReference type="ChEBI" id="CHEBI:29105"/>
    </ligand>
</feature>